<proteinExistence type="inferred from homology"/>
<keyword id="KW-0963">Cytoplasm</keyword>
<keyword id="KW-0489">Methyltransferase</keyword>
<keyword id="KW-0694">RNA-binding</keyword>
<keyword id="KW-0698">rRNA processing</keyword>
<keyword id="KW-0949">S-adenosyl-L-methionine</keyword>
<keyword id="KW-0808">Transferase</keyword>
<protein>
    <recommendedName>
        <fullName evidence="1">Ribosomal RNA large subunit methyltransferase I</fullName>
        <ecNumber evidence="1">2.1.1.191</ecNumber>
    </recommendedName>
    <alternativeName>
        <fullName evidence="1">23S rRNA m5C1962 methyltransferase</fullName>
    </alternativeName>
    <alternativeName>
        <fullName evidence="1">rRNA (cytosine-C(5)-)-methyltransferase RlmI</fullName>
    </alternativeName>
</protein>
<accession>A5F8G8</accession>
<accession>C3M0B5</accession>
<name>RLMI_VIBC3</name>
<reference key="1">
    <citation type="submission" date="2007-03" db="EMBL/GenBank/DDBJ databases">
        <authorList>
            <person name="Heidelberg J."/>
        </authorList>
    </citation>
    <scope>NUCLEOTIDE SEQUENCE [LARGE SCALE GENOMIC DNA]</scope>
    <source>
        <strain>ATCC 39541 / Classical Ogawa 395 / O395</strain>
    </source>
</reference>
<reference key="2">
    <citation type="journal article" date="2008" name="PLoS ONE">
        <title>A recalibrated molecular clock and independent origins for the cholera pandemic clones.</title>
        <authorList>
            <person name="Feng L."/>
            <person name="Reeves P.R."/>
            <person name="Lan R."/>
            <person name="Ren Y."/>
            <person name="Gao C."/>
            <person name="Zhou Z."/>
            <person name="Ren Y."/>
            <person name="Cheng J."/>
            <person name="Wang W."/>
            <person name="Wang J."/>
            <person name="Qian W."/>
            <person name="Li D."/>
            <person name="Wang L."/>
        </authorList>
    </citation>
    <scope>NUCLEOTIDE SEQUENCE [LARGE SCALE GENOMIC DNA]</scope>
    <source>
        <strain>ATCC 39541 / Classical Ogawa 395 / O395</strain>
    </source>
</reference>
<gene>
    <name evidence="1" type="primary">rlmI</name>
    <name type="ordered locus">VC0395_A0968</name>
    <name type="ordered locus">VC395_1473</name>
</gene>
<comment type="function">
    <text evidence="1">Specifically methylates the cytosine at position 1962 (m5C1962) of 23S rRNA.</text>
</comment>
<comment type="catalytic activity">
    <reaction evidence="1">
        <text>cytidine(1962) in 23S rRNA + S-adenosyl-L-methionine = 5-methylcytidine(1962) in 23S rRNA + S-adenosyl-L-homocysteine + H(+)</text>
        <dbReference type="Rhea" id="RHEA:42912"/>
        <dbReference type="Rhea" id="RHEA-COMP:10382"/>
        <dbReference type="Rhea" id="RHEA-COMP:10386"/>
        <dbReference type="ChEBI" id="CHEBI:15378"/>
        <dbReference type="ChEBI" id="CHEBI:57856"/>
        <dbReference type="ChEBI" id="CHEBI:59789"/>
        <dbReference type="ChEBI" id="CHEBI:74483"/>
        <dbReference type="ChEBI" id="CHEBI:82748"/>
        <dbReference type="EC" id="2.1.1.191"/>
    </reaction>
</comment>
<comment type="subcellular location">
    <subcellularLocation>
        <location evidence="1">Cytoplasm</location>
    </subcellularLocation>
</comment>
<comment type="similarity">
    <text evidence="1">Belongs to the methyltransferase superfamily. RlmI family.</text>
</comment>
<comment type="sequence caution" evidence="2">
    <conflict type="erroneous initiation">
        <sequence resource="EMBL-CDS" id="ABQ19731"/>
    </conflict>
</comment>
<comment type="sequence caution" evidence="2">
    <conflict type="erroneous initiation">
        <sequence resource="EMBL-CDS" id="ACP09481"/>
    </conflict>
</comment>
<sequence length="397" mass="44599">MTPAIYLVKGRDKSLRRKHPWVFSRGISKVEGTPKLGETVDVYSFEGKWLAKAAYSPHSQITARVWSFEQEPIDRDFFIKRIEQAQLLRNDIIERDGLTGYRLIAAESDGLPGITIDKYQDYLVCQLLSAGAEYQKQTLVEALLHCFPECHIYERSDVAVRKKEGLDERVGVLHGELPPKSVVIEENGVKISVDIVGGHKTGFYLDQRDSRFQSMKYVKEKEVLNCFSYTGGFGLYALKGGAKRVINADVSQPALDTAKFNAELNGFDISKKRAVFLNADVFKLLREYRDQGTRFDVVVMDPPKFAESKAQLDGACRGYKDINMLAMQILNPGGTLLTYSCSGLMDQVLFQKIIADAALDAGRDVKFVERFEQAADHPTDTAYPEGFYLKGFACKVL</sequence>
<dbReference type="EC" id="2.1.1.191" evidence="1"/>
<dbReference type="EMBL" id="CP000627">
    <property type="protein sequence ID" value="ABQ19731.1"/>
    <property type="status" value="ALT_INIT"/>
    <property type="molecule type" value="Genomic_DNA"/>
</dbReference>
<dbReference type="EMBL" id="CP001235">
    <property type="protein sequence ID" value="ACP09481.1"/>
    <property type="status" value="ALT_INIT"/>
    <property type="molecule type" value="Genomic_DNA"/>
</dbReference>
<dbReference type="RefSeq" id="WP_000186581.1">
    <property type="nucleotide sequence ID" value="NZ_JAACZH010000002.1"/>
</dbReference>
<dbReference type="SMR" id="A5F8G8"/>
<dbReference type="KEGG" id="vco:VC0395_A0968"/>
<dbReference type="KEGG" id="vcr:VC395_1473"/>
<dbReference type="PATRIC" id="fig|345073.21.peg.1427"/>
<dbReference type="eggNOG" id="COG1092">
    <property type="taxonomic scope" value="Bacteria"/>
</dbReference>
<dbReference type="HOGENOM" id="CLU_014042_0_0_6"/>
<dbReference type="OrthoDB" id="9805492at2"/>
<dbReference type="Proteomes" id="UP000000249">
    <property type="component" value="Chromosome 2"/>
</dbReference>
<dbReference type="GO" id="GO:0005737">
    <property type="term" value="C:cytoplasm"/>
    <property type="evidence" value="ECO:0007669"/>
    <property type="project" value="UniProtKB-SubCell"/>
</dbReference>
<dbReference type="GO" id="GO:0003723">
    <property type="term" value="F:RNA binding"/>
    <property type="evidence" value="ECO:0007669"/>
    <property type="project" value="UniProtKB-KW"/>
</dbReference>
<dbReference type="GO" id="GO:0016434">
    <property type="term" value="F:rRNA (cytosine) methyltransferase activity"/>
    <property type="evidence" value="ECO:0007669"/>
    <property type="project" value="UniProtKB-UniRule"/>
</dbReference>
<dbReference type="CDD" id="cd02440">
    <property type="entry name" value="AdoMet_MTases"/>
    <property type="match status" value="1"/>
</dbReference>
<dbReference type="CDD" id="cd21153">
    <property type="entry name" value="PUA_RlmI"/>
    <property type="match status" value="1"/>
</dbReference>
<dbReference type="CDD" id="cd11572">
    <property type="entry name" value="RlmI_M_like"/>
    <property type="match status" value="1"/>
</dbReference>
<dbReference type="Gene3D" id="2.30.130.10">
    <property type="entry name" value="PUA domain"/>
    <property type="match status" value="1"/>
</dbReference>
<dbReference type="Gene3D" id="3.30.750.80">
    <property type="entry name" value="RNA methyltransferase domain (HRMD) like"/>
    <property type="match status" value="1"/>
</dbReference>
<dbReference type="Gene3D" id="3.40.50.150">
    <property type="entry name" value="Vaccinia Virus protein VP39"/>
    <property type="match status" value="1"/>
</dbReference>
<dbReference type="HAMAP" id="MF_01857">
    <property type="entry name" value="23SrRNA_methyltr_I"/>
    <property type="match status" value="1"/>
</dbReference>
<dbReference type="InterPro" id="IPR002478">
    <property type="entry name" value="PUA"/>
</dbReference>
<dbReference type="InterPro" id="IPR015947">
    <property type="entry name" value="PUA-like_sf"/>
</dbReference>
<dbReference type="InterPro" id="IPR036974">
    <property type="entry name" value="PUA_sf"/>
</dbReference>
<dbReference type="InterPro" id="IPR023542">
    <property type="entry name" value="RLMI"/>
</dbReference>
<dbReference type="InterPro" id="IPR041532">
    <property type="entry name" value="RlmI-like_PUA"/>
</dbReference>
<dbReference type="InterPro" id="IPR019614">
    <property type="entry name" value="SAM-dep_methyl-trfase"/>
</dbReference>
<dbReference type="InterPro" id="IPR029063">
    <property type="entry name" value="SAM-dependent_MTases_sf"/>
</dbReference>
<dbReference type="PANTHER" id="PTHR42873">
    <property type="entry name" value="RIBOSOMAL RNA LARGE SUBUNIT METHYLTRANSFERASE"/>
    <property type="match status" value="1"/>
</dbReference>
<dbReference type="PANTHER" id="PTHR42873:SF1">
    <property type="entry name" value="S-ADENOSYLMETHIONINE-DEPENDENT METHYLTRANSFERASE DOMAIN-CONTAINING PROTEIN"/>
    <property type="match status" value="1"/>
</dbReference>
<dbReference type="Pfam" id="PF10672">
    <property type="entry name" value="Methyltrans_SAM"/>
    <property type="match status" value="1"/>
</dbReference>
<dbReference type="Pfam" id="PF17785">
    <property type="entry name" value="PUA_3"/>
    <property type="match status" value="1"/>
</dbReference>
<dbReference type="SMART" id="SM00359">
    <property type="entry name" value="PUA"/>
    <property type="match status" value="1"/>
</dbReference>
<dbReference type="SUPFAM" id="SSF88697">
    <property type="entry name" value="PUA domain-like"/>
    <property type="match status" value="1"/>
</dbReference>
<dbReference type="SUPFAM" id="SSF53335">
    <property type="entry name" value="S-adenosyl-L-methionine-dependent methyltransferases"/>
    <property type="match status" value="1"/>
</dbReference>
<dbReference type="PROSITE" id="PS50890">
    <property type="entry name" value="PUA"/>
    <property type="match status" value="1"/>
</dbReference>
<evidence type="ECO:0000255" key="1">
    <source>
        <dbReference type="HAMAP-Rule" id="MF_01857"/>
    </source>
</evidence>
<evidence type="ECO:0000305" key="2"/>
<feature type="chain" id="PRO_0000366272" description="Ribosomal RNA large subunit methyltransferase I">
    <location>
        <begin position="1"/>
        <end position="397"/>
    </location>
</feature>
<feature type="domain" description="PUA" evidence="1">
    <location>
        <begin position="2"/>
        <end position="78"/>
    </location>
</feature>
<organism>
    <name type="scientific">Vibrio cholerae serotype O1 (strain ATCC 39541 / Classical Ogawa 395 / O395)</name>
    <dbReference type="NCBI Taxonomy" id="345073"/>
    <lineage>
        <taxon>Bacteria</taxon>
        <taxon>Pseudomonadati</taxon>
        <taxon>Pseudomonadota</taxon>
        <taxon>Gammaproteobacteria</taxon>
        <taxon>Vibrionales</taxon>
        <taxon>Vibrionaceae</taxon>
        <taxon>Vibrio</taxon>
    </lineage>
</organism>